<proteinExistence type="evidence at protein level"/>
<keyword id="KW-0539">Nucleus</keyword>
<keyword id="KW-1267">Proteomics identification</keyword>
<keyword id="KW-1185">Reference proteome</keyword>
<keyword id="KW-0687">Ribonucleoprotein</keyword>
<keyword id="KW-0694">RNA-binding</keyword>
<evidence type="ECO:0000255" key="1">
    <source>
        <dbReference type="PROSITE-ProRule" id="PRU00176"/>
    </source>
</evidence>
<evidence type="ECO:0000256" key="2">
    <source>
        <dbReference type="SAM" id="MobiDB-lite"/>
    </source>
</evidence>
<evidence type="ECO:0000269" key="3">
    <source>
    </source>
</evidence>
<evidence type="ECO:0000269" key="4">
    <source>
    </source>
</evidence>
<evidence type="ECO:0000269" key="5">
    <source ref="1"/>
</evidence>
<comment type="subcellular location">
    <subcellularLocation>
        <location evidence="3">Nucleus</location>
    </subcellularLocation>
</comment>
<comment type="tissue specificity">
    <text evidence="3">Expressed predominantly in spermatocytes and less in round spermatids (at protein level). Expressed in germ cells.</text>
</comment>
<organism>
    <name type="scientific">Homo sapiens</name>
    <name type="common">Human</name>
    <dbReference type="NCBI Taxonomy" id="9606"/>
    <lineage>
        <taxon>Eukaryota</taxon>
        <taxon>Metazoa</taxon>
        <taxon>Chordata</taxon>
        <taxon>Craniata</taxon>
        <taxon>Vertebrata</taxon>
        <taxon>Euteleostomi</taxon>
        <taxon>Mammalia</taxon>
        <taxon>Eutheria</taxon>
        <taxon>Euarchontoglires</taxon>
        <taxon>Primates</taxon>
        <taxon>Haplorrhini</taxon>
        <taxon>Catarrhini</taxon>
        <taxon>Hominidae</taxon>
        <taxon>Homo</taxon>
    </lineage>
</organism>
<accession>O75526</accession>
<accession>Q6PEZ2</accession>
<accession>Q9NQU0</accession>
<dbReference type="EMBL" id="AF069682">
    <property type="protein sequence ID" value="AAC24858.2"/>
    <property type="molecule type" value="mRNA"/>
</dbReference>
<dbReference type="EMBL" id="AC100875">
    <property type="status" value="NOT_ANNOTATED_CDS"/>
    <property type="molecule type" value="Genomic_DNA"/>
</dbReference>
<dbReference type="EMBL" id="BC057796">
    <property type="protein sequence ID" value="AAH57796.1"/>
    <property type="molecule type" value="mRNA"/>
</dbReference>
<dbReference type="EMBL" id="AF279289">
    <property type="protein sequence ID" value="AAF82129.1"/>
    <property type="molecule type" value="Genomic_DNA"/>
</dbReference>
<dbReference type="CCDS" id="CCDS7777.1"/>
<dbReference type="RefSeq" id="NP_055284.3">
    <property type="nucleotide sequence ID" value="NM_014469.4"/>
</dbReference>
<dbReference type="SMR" id="O75526"/>
<dbReference type="BioGRID" id="118112">
    <property type="interactions" value="50"/>
</dbReference>
<dbReference type="CORUM" id="O75526"/>
<dbReference type="FunCoup" id="O75526">
    <property type="interactions" value="426"/>
</dbReference>
<dbReference type="IntAct" id="O75526">
    <property type="interactions" value="28"/>
</dbReference>
<dbReference type="MINT" id="O75526"/>
<dbReference type="STRING" id="9606.ENSP00000304139"/>
<dbReference type="iPTMnet" id="O75526"/>
<dbReference type="MetOSite" id="O75526"/>
<dbReference type="PhosphoSitePlus" id="O75526"/>
<dbReference type="BioMuta" id="RBMXL2"/>
<dbReference type="jPOST" id="O75526"/>
<dbReference type="MassIVE" id="O75526"/>
<dbReference type="PaxDb" id="9606-ENSP00000304139"/>
<dbReference type="PeptideAtlas" id="O75526"/>
<dbReference type="ProteomicsDB" id="50063"/>
<dbReference type="Antibodypedia" id="23993">
    <property type="antibodies" value="68 antibodies from 18 providers"/>
</dbReference>
<dbReference type="DNASU" id="27288"/>
<dbReference type="Ensembl" id="ENST00000306904.7">
    <property type="protein sequence ID" value="ENSP00000304139.5"/>
    <property type="gene ID" value="ENSG00000170748.7"/>
</dbReference>
<dbReference type="GeneID" id="27288"/>
<dbReference type="KEGG" id="hsa:27288"/>
<dbReference type="MANE-Select" id="ENST00000306904.7">
    <property type="protein sequence ID" value="ENSP00000304139.5"/>
    <property type="RefSeq nucleotide sequence ID" value="NM_014469.5"/>
    <property type="RefSeq protein sequence ID" value="NP_055284.3"/>
</dbReference>
<dbReference type="UCSC" id="uc001mfc.3">
    <property type="organism name" value="human"/>
</dbReference>
<dbReference type="AGR" id="HGNC:17886"/>
<dbReference type="CTD" id="27288"/>
<dbReference type="DisGeNET" id="27288"/>
<dbReference type="GeneCards" id="RBMXL2"/>
<dbReference type="HGNC" id="HGNC:17886">
    <property type="gene designation" value="RBMXL2"/>
</dbReference>
<dbReference type="HPA" id="ENSG00000170748">
    <property type="expression patterns" value="Tissue enriched (testis)"/>
</dbReference>
<dbReference type="MIM" id="605444">
    <property type="type" value="gene"/>
</dbReference>
<dbReference type="neXtProt" id="NX_O75526"/>
<dbReference type="OpenTargets" id="ENSG00000170748"/>
<dbReference type="PharmGKB" id="PA162400840"/>
<dbReference type="VEuPathDB" id="HostDB:ENSG00000170748"/>
<dbReference type="eggNOG" id="ENOG502SBHG">
    <property type="taxonomic scope" value="Eukaryota"/>
</dbReference>
<dbReference type="GeneTree" id="ENSGT00940000162929"/>
<dbReference type="HOGENOM" id="CLU_042286_0_0_1"/>
<dbReference type="InParanoid" id="O75526"/>
<dbReference type="OMA" id="SARDECP"/>
<dbReference type="OrthoDB" id="439808at2759"/>
<dbReference type="PAN-GO" id="O75526">
    <property type="GO annotations" value="4 GO annotations based on evolutionary models"/>
</dbReference>
<dbReference type="PhylomeDB" id="O75526"/>
<dbReference type="TreeFam" id="TF331833"/>
<dbReference type="PathwayCommons" id="O75526"/>
<dbReference type="SignaLink" id="O75526"/>
<dbReference type="BioGRID-ORCS" id="27288">
    <property type="hits" value="12 hits in 1141 CRISPR screens"/>
</dbReference>
<dbReference type="GenomeRNAi" id="27288"/>
<dbReference type="Pharos" id="O75526">
    <property type="development level" value="Tbio"/>
</dbReference>
<dbReference type="PRO" id="PR:O75526"/>
<dbReference type="Proteomes" id="UP000005640">
    <property type="component" value="Chromosome 11"/>
</dbReference>
<dbReference type="RNAct" id="O75526">
    <property type="molecule type" value="protein"/>
</dbReference>
<dbReference type="Bgee" id="ENSG00000170748">
    <property type="expression patterns" value="Expressed in sperm and 26 other cell types or tissues"/>
</dbReference>
<dbReference type="GO" id="GO:0005634">
    <property type="term" value="C:nucleus"/>
    <property type="evidence" value="ECO:0007669"/>
    <property type="project" value="UniProtKB-SubCell"/>
</dbReference>
<dbReference type="GO" id="GO:1990904">
    <property type="term" value="C:ribonucleoprotein complex"/>
    <property type="evidence" value="ECO:0007669"/>
    <property type="project" value="UniProtKB-KW"/>
</dbReference>
<dbReference type="GO" id="GO:0003729">
    <property type="term" value="F:mRNA binding"/>
    <property type="evidence" value="ECO:0000318"/>
    <property type="project" value="GO_Central"/>
</dbReference>
<dbReference type="GO" id="GO:0017069">
    <property type="term" value="F:snRNA binding"/>
    <property type="evidence" value="ECO:0000318"/>
    <property type="project" value="GO_Central"/>
</dbReference>
<dbReference type="GO" id="GO:0000398">
    <property type="term" value="P:mRNA splicing, via spliceosome"/>
    <property type="evidence" value="ECO:0000318"/>
    <property type="project" value="GO_Central"/>
</dbReference>
<dbReference type="CDD" id="cd12382">
    <property type="entry name" value="RRM_RBMX_like"/>
    <property type="match status" value="1"/>
</dbReference>
<dbReference type="FunFam" id="3.30.70.330:FF:000119">
    <property type="entry name" value="RNA-binding motif protein, X chromosome"/>
    <property type="match status" value="1"/>
</dbReference>
<dbReference type="Gene3D" id="3.30.70.330">
    <property type="match status" value="1"/>
</dbReference>
<dbReference type="InterPro" id="IPR012677">
    <property type="entry name" value="Nucleotide-bd_a/b_plait_sf"/>
</dbReference>
<dbReference type="InterPro" id="IPR035979">
    <property type="entry name" value="RBD_domain_sf"/>
</dbReference>
<dbReference type="InterPro" id="IPR050441">
    <property type="entry name" value="RBM"/>
</dbReference>
<dbReference type="InterPro" id="IPR012604">
    <property type="entry name" value="RBM1CTR"/>
</dbReference>
<dbReference type="InterPro" id="IPR000504">
    <property type="entry name" value="RRM_dom"/>
</dbReference>
<dbReference type="InterPro" id="IPR003954">
    <property type="entry name" value="RRM_dom_euk"/>
</dbReference>
<dbReference type="PANTHER" id="PTHR48034">
    <property type="entry name" value="TRANSFORMER-2 SEX-DETERMINING PROTEIN-RELATED"/>
    <property type="match status" value="1"/>
</dbReference>
<dbReference type="Pfam" id="PF08081">
    <property type="entry name" value="RBM1CTR"/>
    <property type="match status" value="1"/>
</dbReference>
<dbReference type="Pfam" id="PF00076">
    <property type="entry name" value="RRM_1"/>
    <property type="match status" value="1"/>
</dbReference>
<dbReference type="SMART" id="SM00360">
    <property type="entry name" value="RRM"/>
    <property type="match status" value="1"/>
</dbReference>
<dbReference type="SMART" id="SM00361">
    <property type="entry name" value="RRM_1"/>
    <property type="match status" value="1"/>
</dbReference>
<dbReference type="SUPFAM" id="SSF54928">
    <property type="entry name" value="RNA-binding domain, RBD"/>
    <property type="match status" value="1"/>
</dbReference>
<dbReference type="PROSITE" id="PS50102">
    <property type="entry name" value="RRM"/>
    <property type="match status" value="1"/>
</dbReference>
<feature type="chain" id="PRO_0000281737" description="RNA-binding motif protein, X-linked-like-2">
    <location>
        <begin position="1"/>
        <end position="392"/>
    </location>
</feature>
<feature type="domain" description="RRM" evidence="1">
    <location>
        <begin position="8"/>
        <end position="86"/>
    </location>
</feature>
<feature type="region of interest" description="Disordered" evidence="2">
    <location>
        <begin position="67"/>
        <end position="392"/>
    </location>
</feature>
<feature type="compositionally biased region" description="Basic and acidic residues" evidence="2">
    <location>
        <begin position="67"/>
        <end position="78"/>
    </location>
</feature>
<feature type="compositionally biased region" description="Pro residues" evidence="2">
    <location>
        <begin position="150"/>
        <end position="163"/>
    </location>
</feature>
<feature type="compositionally biased region" description="Basic and acidic residues" evidence="2">
    <location>
        <begin position="194"/>
        <end position="229"/>
    </location>
</feature>
<feature type="compositionally biased region" description="Basic and acidic residues" evidence="2">
    <location>
        <begin position="238"/>
        <end position="283"/>
    </location>
</feature>
<feature type="compositionally biased region" description="Low complexity" evidence="2">
    <location>
        <begin position="319"/>
        <end position="331"/>
    </location>
</feature>
<feature type="compositionally biased region" description="Basic and acidic residues" evidence="2">
    <location>
        <begin position="381"/>
        <end position="392"/>
    </location>
</feature>
<feature type="sequence variant" id="VAR_055334" description="In dbSNP:rs17857474." evidence="4">
    <original>L</original>
    <variation>F</variation>
    <location>
        <position position="15"/>
    </location>
</feature>
<feature type="sequence variant" id="VAR_061833" description="In dbSNP:rs11041170." evidence="3">
    <original>A</original>
    <variation>V</variation>
    <location>
        <position position="66"/>
    </location>
</feature>
<feature type="sequence variant" id="VAR_055335" description="In dbSNP:rs11041171." evidence="3 4 5">
    <original>T</original>
    <variation>A</variation>
    <location>
        <position position="134"/>
    </location>
</feature>
<feature type="sequence variant" id="VAR_055336" description="In dbSNP:rs17854944." evidence="4">
    <original>Y</original>
    <variation>C</variation>
    <location>
        <position position="308"/>
    </location>
</feature>
<reference key="1">
    <citation type="submission" date="2000-06" db="EMBL/GenBank/DDBJ databases">
        <authorList>
            <person name="Newton C.S."/>
            <person name="Venables J.P."/>
            <person name="Eperon I.C."/>
        </authorList>
    </citation>
    <scope>NUCLEOTIDE SEQUENCE [MRNA]</scope>
    <scope>VARIANT ALA-134</scope>
    <source>
        <tissue>Testis</tissue>
    </source>
</reference>
<reference key="2">
    <citation type="journal article" date="2006" name="Nature">
        <title>Human chromosome 11 DNA sequence and analysis including novel gene identification.</title>
        <authorList>
            <person name="Taylor T.D."/>
            <person name="Noguchi H."/>
            <person name="Totoki Y."/>
            <person name="Toyoda A."/>
            <person name="Kuroki Y."/>
            <person name="Dewar K."/>
            <person name="Lloyd C."/>
            <person name="Itoh T."/>
            <person name="Takeda T."/>
            <person name="Kim D.-W."/>
            <person name="She X."/>
            <person name="Barlow K.F."/>
            <person name="Bloom T."/>
            <person name="Bruford E."/>
            <person name="Chang J.L."/>
            <person name="Cuomo C.A."/>
            <person name="Eichler E."/>
            <person name="FitzGerald M.G."/>
            <person name="Jaffe D.B."/>
            <person name="LaButti K."/>
            <person name="Nicol R."/>
            <person name="Park H.-S."/>
            <person name="Seaman C."/>
            <person name="Sougnez C."/>
            <person name="Yang X."/>
            <person name="Zimmer A.R."/>
            <person name="Zody M.C."/>
            <person name="Birren B.W."/>
            <person name="Nusbaum C."/>
            <person name="Fujiyama A."/>
            <person name="Hattori M."/>
            <person name="Rogers J."/>
            <person name="Lander E.S."/>
            <person name="Sakaki Y."/>
        </authorList>
    </citation>
    <scope>NUCLEOTIDE SEQUENCE [LARGE SCALE GENOMIC DNA]</scope>
</reference>
<reference key="3">
    <citation type="journal article" date="2004" name="Genome Res.">
        <title>The status, quality, and expansion of the NIH full-length cDNA project: the Mammalian Gene Collection (MGC).</title>
        <authorList>
            <consortium name="The MGC Project Team"/>
        </authorList>
    </citation>
    <scope>NUCLEOTIDE SEQUENCE [LARGE SCALE MRNA]</scope>
    <scope>VARIANTS PHE-15; ALA-134 AND CYS-308</scope>
    <source>
        <tissue>Brain</tissue>
    </source>
</reference>
<reference key="4">
    <citation type="journal article" date="2000" name="Hum. Mol. Genet.">
        <title>An evolutionarily conserved germ cell-specific hnRNP is encoded by a retrotransposed gene.</title>
        <authorList>
            <person name="Elliott D.J."/>
            <person name="Venables J.P."/>
            <person name="Newton C.S."/>
            <person name="Lawson D."/>
            <person name="Boyle S."/>
            <person name="Eperon I.C."/>
            <person name="Cooke H.J."/>
        </authorList>
    </citation>
    <scope>NUCLEOTIDE SEQUENCE [GENOMIC DNA] OF 7-392</scope>
    <scope>SUBCELLULAR LOCATION</scope>
    <scope>TISSUE SPECIFICITY</scope>
    <scope>VARIANTS VAL-66 AND ALA-134</scope>
</reference>
<sequence>MVEADRPGKLFIGGLNLETDEKALEAEFGKYGRIVEVLLMKDRETNKSRGFAFVTFESPADAKAAARDMNGKSLDGKAIKVAQATKPAFESSRRGPPPPRSRGRPRFLRGTRGGGGGPRRSPSRGGPDDDGGYTADFDLRPSRAPMPMKRGPPPRRVGPPPKRAAPSGPARSSGGGMRGRALAVRGRDGYSGPPRREPLPPRRDPYLGPRDEGYSSRDGYSSRDYREPRGFAPSPGEYTHRDYGHSSVRDDCPLRGYSDRDGYGGRDRDYGDHLSRGSHREPFESYGELRGAAPGRGTPPSYGGGGRYEEYRGYSPDAYSGGRDSYSSSYGRSDRYSRGRHRVGRPDRGLSLSMERGCPPQRDSYSRSGCRVPRGGGRLGGRLERGGGRSRY</sequence>
<name>RMXL2_HUMAN</name>
<protein>
    <recommendedName>
        <fullName>RNA-binding motif protein, X-linked-like-2</fullName>
    </recommendedName>
    <alternativeName>
        <fullName>Testis-specific heterogeneous nuclear ribonucleoprotein G-T</fullName>
        <shortName>hnRNP G-T</shortName>
    </alternativeName>
</protein>
<gene>
    <name type="primary">RBMXL2</name>
    <name type="synonym">HNRNPGT</name>
</gene>